<name>TGT_LISMC</name>
<keyword id="KW-0328">Glycosyltransferase</keyword>
<keyword id="KW-0479">Metal-binding</keyword>
<keyword id="KW-0671">Queuosine biosynthesis</keyword>
<keyword id="KW-0808">Transferase</keyword>
<keyword id="KW-0819">tRNA processing</keyword>
<keyword id="KW-0862">Zinc</keyword>
<sequence>MSAIRYELIKTDKQTGARLGKIHTPHGTFDTPMFMPVGTLATVKTMSPEELKAMGAGIILSNTYHLWLRPGEELIREAGGLHKFMNWDQPILTDSGGFQVFSLSKMRDIKEEGVHFRNHLNGDKLFLSPEKAIQIQNALGSDIMMSFDECPPYPASHEYMKKSVERTSRWAERGLKAHVRPEDQGLFGIVQGGAYEDLRAQSAKDLVSLDFPGYSIGGLSVGEPKDVMNRVLEHTTPLLPANKPRYLMGVGSPDSLIDGVIRGVDMFDCVLPTRIARNGTCMTSSGRLVIKNAKFTHDFRPIDENCDCYTCKNYSRAYIRHLIRCEETFGIRLTTYHNLHFLLNLMKQVRGAIMEDRLADFREEFFEQYGFNRPDAKNF</sequence>
<feature type="chain" id="PRO_1000203657" description="Queuine tRNA-ribosyltransferase">
    <location>
        <begin position="1"/>
        <end position="379"/>
    </location>
</feature>
<feature type="region of interest" description="RNA binding" evidence="1">
    <location>
        <begin position="249"/>
        <end position="255"/>
    </location>
</feature>
<feature type="region of interest" description="RNA binding; important for wobble base 34 recognition" evidence="1">
    <location>
        <begin position="273"/>
        <end position="277"/>
    </location>
</feature>
<feature type="active site" description="Proton acceptor" evidence="1">
    <location>
        <position position="94"/>
    </location>
</feature>
<feature type="active site" description="Nucleophile" evidence="1">
    <location>
        <position position="268"/>
    </location>
</feature>
<feature type="binding site" evidence="1">
    <location>
        <begin position="94"/>
        <end position="98"/>
    </location>
    <ligand>
        <name>substrate</name>
    </ligand>
</feature>
<feature type="binding site" evidence="1">
    <location>
        <position position="148"/>
    </location>
    <ligand>
        <name>substrate</name>
    </ligand>
</feature>
<feature type="binding site" evidence="1">
    <location>
        <position position="191"/>
    </location>
    <ligand>
        <name>substrate</name>
    </ligand>
</feature>
<feature type="binding site" evidence="1">
    <location>
        <position position="218"/>
    </location>
    <ligand>
        <name>substrate</name>
    </ligand>
</feature>
<feature type="binding site" evidence="1">
    <location>
        <position position="306"/>
    </location>
    <ligand>
        <name>Zn(2+)</name>
        <dbReference type="ChEBI" id="CHEBI:29105"/>
    </ligand>
</feature>
<feature type="binding site" evidence="1">
    <location>
        <position position="308"/>
    </location>
    <ligand>
        <name>Zn(2+)</name>
        <dbReference type="ChEBI" id="CHEBI:29105"/>
    </ligand>
</feature>
<feature type="binding site" evidence="1">
    <location>
        <position position="311"/>
    </location>
    <ligand>
        <name>Zn(2+)</name>
        <dbReference type="ChEBI" id="CHEBI:29105"/>
    </ligand>
</feature>
<feature type="binding site" evidence="1">
    <location>
        <position position="337"/>
    </location>
    <ligand>
        <name>Zn(2+)</name>
        <dbReference type="ChEBI" id="CHEBI:29105"/>
    </ligand>
</feature>
<reference key="1">
    <citation type="journal article" date="2012" name="BMC Genomics">
        <title>Comparative genomics and transcriptomics of lineages I, II, and III strains of Listeria monocytogenes.</title>
        <authorList>
            <person name="Hain T."/>
            <person name="Ghai R."/>
            <person name="Billion A."/>
            <person name="Kuenne C.T."/>
            <person name="Steinweg C."/>
            <person name="Izar B."/>
            <person name="Mohamed W."/>
            <person name="Mraheil M."/>
            <person name="Domann E."/>
            <person name="Schaffrath S."/>
            <person name="Karst U."/>
            <person name="Goesmann A."/>
            <person name="Oehm S."/>
            <person name="Puhler A."/>
            <person name="Merkl R."/>
            <person name="Vorwerk S."/>
            <person name="Glaser P."/>
            <person name="Garrido P."/>
            <person name="Rusniok C."/>
            <person name="Buchrieser C."/>
            <person name="Goebel W."/>
            <person name="Chakraborty T."/>
        </authorList>
    </citation>
    <scope>NUCLEOTIDE SEQUENCE [LARGE SCALE GENOMIC DNA]</scope>
    <source>
        <strain>CLIP80459</strain>
    </source>
</reference>
<evidence type="ECO:0000255" key="1">
    <source>
        <dbReference type="HAMAP-Rule" id="MF_00168"/>
    </source>
</evidence>
<comment type="function">
    <text evidence="1">Catalyzes the base-exchange of a guanine (G) residue with the queuine precursor 7-aminomethyl-7-deazaguanine (PreQ1) at position 34 (anticodon wobble position) in tRNAs with GU(N) anticodons (tRNA-Asp, -Asn, -His and -Tyr). Catalysis occurs through a double-displacement mechanism. The nucleophile active site attacks the C1' of nucleotide 34 to detach the guanine base from the RNA, forming a covalent enzyme-RNA intermediate. The proton acceptor active site deprotonates the incoming PreQ1, allowing a nucleophilic attack on the C1' of the ribose to form the product. After dissociation, two additional enzymatic reactions on the tRNA convert PreQ1 to queuine (Q), resulting in the hypermodified nucleoside queuosine (7-(((4,5-cis-dihydroxy-2-cyclopenten-1-yl)amino)methyl)-7-deazaguanosine).</text>
</comment>
<comment type="catalytic activity">
    <reaction evidence="1">
        <text>7-aminomethyl-7-carbaguanine + guanosine(34) in tRNA = 7-aminomethyl-7-carbaguanosine(34) in tRNA + guanine</text>
        <dbReference type="Rhea" id="RHEA:24104"/>
        <dbReference type="Rhea" id="RHEA-COMP:10341"/>
        <dbReference type="Rhea" id="RHEA-COMP:10342"/>
        <dbReference type="ChEBI" id="CHEBI:16235"/>
        <dbReference type="ChEBI" id="CHEBI:58703"/>
        <dbReference type="ChEBI" id="CHEBI:74269"/>
        <dbReference type="ChEBI" id="CHEBI:82833"/>
        <dbReference type="EC" id="2.4.2.29"/>
    </reaction>
</comment>
<comment type="cofactor">
    <cofactor evidence="1">
        <name>Zn(2+)</name>
        <dbReference type="ChEBI" id="CHEBI:29105"/>
    </cofactor>
    <text evidence="1">Binds 1 zinc ion per subunit.</text>
</comment>
<comment type="pathway">
    <text evidence="1">tRNA modification; tRNA-queuosine biosynthesis.</text>
</comment>
<comment type="subunit">
    <text evidence="1">Homodimer. Within each dimer, one monomer is responsible for RNA recognition and catalysis, while the other monomer binds to the replacement base PreQ1.</text>
</comment>
<comment type="similarity">
    <text evidence="1">Belongs to the queuine tRNA-ribosyltransferase family.</text>
</comment>
<gene>
    <name evidence="1" type="primary">tgt</name>
    <name type="ordered locus">Lm4b_01540</name>
</gene>
<dbReference type="EC" id="2.4.2.29" evidence="1"/>
<dbReference type="EMBL" id="FM242711">
    <property type="protein sequence ID" value="CAS05302.1"/>
    <property type="molecule type" value="Genomic_DNA"/>
</dbReference>
<dbReference type="RefSeq" id="WP_003723534.1">
    <property type="nucleotide sequence ID" value="NC_012488.1"/>
</dbReference>
<dbReference type="SMR" id="C1KVH7"/>
<dbReference type="KEGG" id="lmc:Lm4b_01540"/>
<dbReference type="HOGENOM" id="CLU_022060_0_1_9"/>
<dbReference type="UniPathway" id="UPA00392"/>
<dbReference type="GO" id="GO:0005829">
    <property type="term" value="C:cytosol"/>
    <property type="evidence" value="ECO:0007669"/>
    <property type="project" value="TreeGrafter"/>
</dbReference>
<dbReference type="GO" id="GO:0046872">
    <property type="term" value="F:metal ion binding"/>
    <property type="evidence" value="ECO:0007669"/>
    <property type="project" value="UniProtKB-KW"/>
</dbReference>
<dbReference type="GO" id="GO:0008479">
    <property type="term" value="F:tRNA-guanosine(34) queuine transglycosylase activity"/>
    <property type="evidence" value="ECO:0007669"/>
    <property type="project" value="UniProtKB-UniRule"/>
</dbReference>
<dbReference type="GO" id="GO:0008616">
    <property type="term" value="P:queuosine biosynthetic process"/>
    <property type="evidence" value="ECO:0007669"/>
    <property type="project" value="UniProtKB-UniRule"/>
</dbReference>
<dbReference type="GO" id="GO:0002099">
    <property type="term" value="P:tRNA wobble guanine modification"/>
    <property type="evidence" value="ECO:0007669"/>
    <property type="project" value="TreeGrafter"/>
</dbReference>
<dbReference type="GO" id="GO:0101030">
    <property type="term" value="P:tRNA-guanine transglycosylation"/>
    <property type="evidence" value="ECO:0007669"/>
    <property type="project" value="InterPro"/>
</dbReference>
<dbReference type="FunFam" id="3.20.20.105:FF:000001">
    <property type="entry name" value="Queuine tRNA-ribosyltransferase"/>
    <property type="match status" value="1"/>
</dbReference>
<dbReference type="Gene3D" id="3.20.20.105">
    <property type="entry name" value="Queuine tRNA-ribosyltransferase-like"/>
    <property type="match status" value="1"/>
</dbReference>
<dbReference type="HAMAP" id="MF_00168">
    <property type="entry name" value="Q_tRNA_Tgt"/>
    <property type="match status" value="1"/>
</dbReference>
<dbReference type="InterPro" id="IPR050076">
    <property type="entry name" value="ArchSynthase1/Queuine_TRR"/>
</dbReference>
<dbReference type="InterPro" id="IPR004803">
    <property type="entry name" value="TGT"/>
</dbReference>
<dbReference type="InterPro" id="IPR036511">
    <property type="entry name" value="TGT-like_sf"/>
</dbReference>
<dbReference type="InterPro" id="IPR002616">
    <property type="entry name" value="tRNA_ribo_trans-like"/>
</dbReference>
<dbReference type="NCBIfam" id="TIGR00430">
    <property type="entry name" value="Q_tRNA_tgt"/>
    <property type="match status" value="1"/>
</dbReference>
<dbReference type="NCBIfam" id="TIGR00449">
    <property type="entry name" value="tgt_general"/>
    <property type="match status" value="1"/>
</dbReference>
<dbReference type="PANTHER" id="PTHR46499">
    <property type="entry name" value="QUEUINE TRNA-RIBOSYLTRANSFERASE"/>
    <property type="match status" value="1"/>
</dbReference>
<dbReference type="PANTHER" id="PTHR46499:SF1">
    <property type="entry name" value="QUEUINE TRNA-RIBOSYLTRANSFERASE"/>
    <property type="match status" value="1"/>
</dbReference>
<dbReference type="Pfam" id="PF01702">
    <property type="entry name" value="TGT"/>
    <property type="match status" value="1"/>
</dbReference>
<dbReference type="SUPFAM" id="SSF51713">
    <property type="entry name" value="tRNA-guanine transglycosylase"/>
    <property type="match status" value="1"/>
</dbReference>
<organism>
    <name type="scientific">Listeria monocytogenes serotype 4b (strain CLIP80459)</name>
    <dbReference type="NCBI Taxonomy" id="568819"/>
    <lineage>
        <taxon>Bacteria</taxon>
        <taxon>Bacillati</taxon>
        <taxon>Bacillota</taxon>
        <taxon>Bacilli</taxon>
        <taxon>Bacillales</taxon>
        <taxon>Listeriaceae</taxon>
        <taxon>Listeria</taxon>
    </lineage>
</organism>
<accession>C1KVH7</accession>
<protein>
    <recommendedName>
        <fullName evidence="1">Queuine tRNA-ribosyltransferase</fullName>
        <ecNumber evidence="1">2.4.2.29</ecNumber>
    </recommendedName>
    <alternativeName>
        <fullName evidence="1">Guanine insertion enzyme</fullName>
    </alternativeName>
    <alternativeName>
        <fullName evidence="1">tRNA-guanine transglycosylase</fullName>
    </alternativeName>
</protein>
<proteinExistence type="inferred from homology"/>